<evidence type="ECO:0000255" key="1">
    <source>
        <dbReference type="HAMAP-Rule" id="MF_01436"/>
    </source>
</evidence>
<comment type="function">
    <text evidence="1">Component of an export pathway for enterobactin.</text>
</comment>
<comment type="subcellular location">
    <subcellularLocation>
        <location evidence="1">Cell inner membrane</location>
        <topology evidence="1">Multi-pass membrane protein</topology>
    </subcellularLocation>
</comment>
<comment type="similarity">
    <text evidence="1">Belongs to the major facilitator superfamily. EntS (TC 2.A.1.38) family.</text>
</comment>
<name>ENTS_SALTI</name>
<protein>
    <recommendedName>
        <fullName evidence="1">Enterobactin exporter EntS</fullName>
    </recommendedName>
</protein>
<dbReference type="EMBL" id="AL513382">
    <property type="protein sequence ID" value="CAD05069.1"/>
    <property type="molecule type" value="Genomic_DNA"/>
</dbReference>
<dbReference type="EMBL" id="AE014613">
    <property type="protein sequence ID" value="AAO69877.1"/>
    <property type="molecule type" value="Genomic_DNA"/>
</dbReference>
<dbReference type="RefSeq" id="NP_455169.1">
    <property type="nucleotide sequence ID" value="NC_003198.1"/>
</dbReference>
<dbReference type="RefSeq" id="WP_001081657.1">
    <property type="nucleotide sequence ID" value="NZ_WSUR01000008.1"/>
</dbReference>
<dbReference type="SMR" id="Q8Z8L4"/>
<dbReference type="STRING" id="220341.gene:17584650"/>
<dbReference type="KEGG" id="stt:t2275"/>
<dbReference type="KEGG" id="sty:STY0637"/>
<dbReference type="PATRIC" id="fig|220341.7.peg.638"/>
<dbReference type="eggNOG" id="COG0477">
    <property type="taxonomic scope" value="Bacteria"/>
</dbReference>
<dbReference type="HOGENOM" id="CLU_034180_11_0_6"/>
<dbReference type="OMA" id="VQVWHVY"/>
<dbReference type="OrthoDB" id="7283966at2"/>
<dbReference type="Proteomes" id="UP000000541">
    <property type="component" value="Chromosome"/>
</dbReference>
<dbReference type="Proteomes" id="UP000002670">
    <property type="component" value="Chromosome"/>
</dbReference>
<dbReference type="GO" id="GO:0005886">
    <property type="term" value="C:plasma membrane"/>
    <property type="evidence" value="ECO:0007669"/>
    <property type="project" value="UniProtKB-SubCell"/>
</dbReference>
<dbReference type="GO" id="GO:0042931">
    <property type="term" value="F:enterobactin transmembrane transporter activity"/>
    <property type="evidence" value="ECO:0007669"/>
    <property type="project" value="InterPro"/>
</dbReference>
<dbReference type="CDD" id="cd06173">
    <property type="entry name" value="MFS_MefA_like"/>
    <property type="match status" value="1"/>
</dbReference>
<dbReference type="FunFam" id="1.20.1250.20:FF:000056">
    <property type="entry name" value="Enterobactin exporter EntS"/>
    <property type="match status" value="1"/>
</dbReference>
<dbReference type="Gene3D" id="1.20.1250.20">
    <property type="entry name" value="MFS general substrate transporter like domains"/>
    <property type="match status" value="1"/>
</dbReference>
<dbReference type="HAMAP" id="MF_01436">
    <property type="entry name" value="MFS_EntS"/>
    <property type="match status" value="1"/>
</dbReference>
<dbReference type="InterPro" id="IPR023722">
    <property type="entry name" value="Enterobactin_exp_EntS"/>
</dbReference>
<dbReference type="InterPro" id="IPR020846">
    <property type="entry name" value="MFS_dom"/>
</dbReference>
<dbReference type="InterPro" id="IPR036259">
    <property type="entry name" value="MFS_trans_sf"/>
</dbReference>
<dbReference type="InterPro" id="IPR010290">
    <property type="entry name" value="TM_effector"/>
</dbReference>
<dbReference type="NCBIfam" id="NF007792">
    <property type="entry name" value="PRK10489.1"/>
    <property type="match status" value="1"/>
</dbReference>
<dbReference type="PANTHER" id="PTHR23513:SF9">
    <property type="entry name" value="ENTEROBACTIN EXPORTER ENTS"/>
    <property type="match status" value="1"/>
</dbReference>
<dbReference type="PANTHER" id="PTHR23513">
    <property type="entry name" value="INTEGRAL MEMBRANE EFFLUX PROTEIN-RELATED"/>
    <property type="match status" value="1"/>
</dbReference>
<dbReference type="Pfam" id="PF05977">
    <property type="entry name" value="MFS_3"/>
    <property type="match status" value="1"/>
</dbReference>
<dbReference type="SUPFAM" id="SSF103473">
    <property type="entry name" value="MFS general substrate transporter"/>
    <property type="match status" value="1"/>
</dbReference>
<dbReference type="PROSITE" id="PS50850">
    <property type="entry name" value="MFS"/>
    <property type="match status" value="1"/>
</dbReference>
<organism>
    <name type="scientific">Salmonella typhi</name>
    <dbReference type="NCBI Taxonomy" id="90370"/>
    <lineage>
        <taxon>Bacteria</taxon>
        <taxon>Pseudomonadati</taxon>
        <taxon>Pseudomonadota</taxon>
        <taxon>Gammaproteobacteria</taxon>
        <taxon>Enterobacterales</taxon>
        <taxon>Enterobacteriaceae</taxon>
        <taxon>Salmonella</taxon>
    </lineage>
</organism>
<feature type="chain" id="PRO_0000227653" description="Enterobactin exporter EntS">
    <location>
        <begin position="1"/>
        <end position="414"/>
    </location>
</feature>
<feature type="topological domain" description="Cytoplasmic" evidence="1">
    <location>
        <begin position="1"/>
        <end position="21"/>
    </location>
</feature>
<feature type="transmembrane region" description="Helical" evidence="1">
    <location>
        <begin position="22"/>
        <end position="42"/>
    </location>
</feature>
<feature type="topological domain" description="Periplasmic" evidence="1">
    <location>
        <begin position="43"/>
        <end position="55"/>
    </location>
</feature>
<feature type="transmembrane region" description="Helical" evidence="1">
    <location>
        <begin position="56"/>
        <end position="76"/>
    </location>
</feature>
<feature type="topological domain" description="Cytoplasmic" evidence="1">
    <location>
        <begin position="77"/>
        <end position="83"/>
    </location>
</feature>
<feature type="transmembrane region" description="Helical" evidence="1">
    <location>
        <begin position="84"/>
        <end position="104"/>
    </location>
</feature>
<feature type="topological domain" description="Periplasmic" evidence="1">
    <location>
        <begin position="105"/>
        <end position="109"/>
    </location>
</feature>
<feature type="transmembrane region" description="Helical" evidence="1">
    <location>
        <begin position="110"/>
        <end position="130"/>
    </location>
</feature>
<feature type="topological domain" description="Cytoplasmic" evidence="1">
    <location>
        <begin position="131"/>
        <end position="156"/>
    </location>
</feature>
<feature type="transmembrane region" description="Helical" evidence="1">
    <location>
        <begin position="157"/>
        <end position="177"/>
    </location>
</feature>
<feature type="topological domain" description="Periplasmic" evidence="1">
    <location>
        <position position="178"/>
    </location>
</feature>
<feature type="transmembrane region" description="Helical" evidence="1">
    <location>
        <begin position="179"/>
        <end position="199"/>
    </location>
</feature>
<feature type="topological domain" description="Cytoplasmic" evidence="1">
    <location>
        <begin position="200"/>
        <end position="218"/>
    </location>
</feature>
<feature type="transmembrane region" description="Helical" evidence="1">
    <location>
        <begin position="219"/>
        <end position="239"/>
    </location>
</feature>
<feature type="topological domain" description="Periplasmic" evidence="1">
    <location>
        <begin position="240"/>
        <end position="256"/>
    </location>
</feature>
<feature type="transmembrane region" description="Helical" evidence="1">
    <location>
        <begin position="257"/>
        <end position="277"/>
    </location>
</feature>
<feature type="topological domain" description="Cytoplasmic" evidence="1">
    <location>
        <begin position="278"/>
        <end position="287"/>
    </location>
</feature>
<feature type="transmembrane region" description="Helical" evidence="1">
    <location>
        <begin position="288"/>
        <end position="307"/>
    </location>
</feature>
<feature type="topological domain" description="Periplasmic" evidence="1">
    <location>
        <begin position="308"/>
        <end position="313"/>
    </location>
</feature>
<feature type="transmembrane region" description="Helical" evidence="1">
    <location>
        <begin position="314"/>
        <end position="336"/>
    </location>
</feature>
<feature type="topological domain" description="Cytoplasmic" evidence="1">
    <location>
        <begin position="337"/>
        <end position="356"/>
    </location>
</feature>
<feature type="transmembrane region" description="Helical" evidence="1">
    <location>
        <begin position="357"/>
        <end position="377"/>
    </location>
</feature>
<feature type="topological domain" description="Periplasmic" evidence="1">
    <location>
        <position position="378"/>
    </location>
</feature>
<feature type="transmembrane region" description="Helical" evidence="1">
    <location>
        <begin position="379"/>
        <end position="399"/>
    </location>
</feature>
<feature type="topological domain" description="Cytoplasmic" evidence="1">
    <location>
        <begin position="400"/>
        <end position="414"/>
    </location>
</feature>
<reference key="1">
    <citation type="journal article" date="2001" name="Nature">
        <title>Complete genome sequence of a multiple drug resistant Salmonella enterica serovar Typhi CT18.</title>
        <authorList>
            <person name="Parkhill J."/>
            <person name="Dougan G."/>
            <person name="James K.D."/>
            <person name="Thomson N.R."/>
            <person name="Pickard D."/>
            <person name="Wain J."/>
            <person name="Churcher C.M."/>
            <person name="Mungall K.L."/>
            <person name="Bentley S.D."/>
            <person name="Holden M.T.G."/>
            <person name="Sebaihia M."/>
            <person name="Baker S."/>
            <person name="Basham D."/>
            <person name="Brooks K."/>
            <person name="Chillingworth T."/>
            <person name="Connerton P."/>
            <person name="Cronin A."/>
            <person name="Davis P."/>
            <person name="Davies R.M."/>
            <person name="Dowd L."/>
            <person name="White N."/>
            <person name="Farrar J."/>
            <person name="Feltwell T."/>
            <person name="Hamlin N."/>
            <person name="Haque A."/>
            <person name="Hien T.T."/>
            <person name="Holroyd S."/>
            <person name="Jagels K."/>
            <person name="Krogh A."/>
            <person name="Larsen T.S."/>
            <person name="Leather S."/>
            <person name="Moule S."/>
            <person name="O'Gaora P."/>
            <person name="Parry C."/>
            <person name="Quail M.A."/>
            <person name="Rutherford K.M."/>
            <person name="Simmonds M."/>
            <person name="Skelton J."/>
            <person name="Stevens K."/>
            <person name="Whitehead S."/>
            <person name="Barrell B.G."/>
        </authorList>
    </citation>
    <scope>NUCLEOTIDE SEQUENCE [LARGE SCALE GENOMIC DNA]</scope>
    <source>
        <strain>CT18</strain>
    </source>
</reference>
<reference key="2">
    <citation type="journal article" date="2003" name="J. Bacteriol.">
        <title>Comparative genomics of Salmonella enterica serovar Typhi strains Ty2 and CT18.</title>
        <authorList>
            <person name="Deng W."/>
            <person name="Liou S.-R."/>
            <person name="Plunkett G. III"/>
            <person name="Mayhew G.F."/>
            <person name="Rose D.J."/>
            <person name="Burland V."/>
            <person name="Kodoyianni V."/>
            <person name="Schwartz D.C."/>
            <person name="Blattner F.R."/>
        </authorList>
    </citation>
    <scope>NUCLEOTIDE SEQUENCE [LARGE SCALE GENOMIC DNA]</scope>
    <source>
        <strain>ATCC 700931 / Ty2</strain>
    </source>
</reference>
<keyword id="KW-0997">Cell inner membrane</keyword>
<keyword id="KW-1003">Cell membrane</keyword>
<keyword id="KW-0472">Membrane</keyword>
<keyword id="KW-0812">Transmembrane</keyword>
<keyword id="KW-1133">Transmembrane helix</keyword>
<keyword id="KW-0813">Transport</keyword>
<proteinExistence type="inferred from homology"/>
<accession>Q8Z8L4</accession>
<accession>Q7C8H2</accession>
<sequence>MNRQSWLLNLSLLKTHPAFRAVFLARFISIVSLGLLGVAVPVQIQMMTHSTWQVGLSVTLTGGAMFIGLMVGGVLADRYERKKVILLARGTCGIGFIGLCVNALLPEPSLLAIYLLGLWDGFFASLGVTALLAATPALVGRENLMQAGAITMLTVRLGSVISPMLGGILLASGGVAWNYGLAAAGTFITLLPLLTLPRLPVPPQPRENPFIALLAAFRFLLASPLIGGIALLGGLVTMASAVRVLYPALAMSWQMSAAQIGLLYAAIPLGAAIGALTSGQLAHSVRPGLIMLVSTVGSFLAVGLFAIMPIWIAGVICLALFGWLSAISSLLQYTLLQTQTPENMLGRMNGLWTAQNVTGDAIGAALLGGLGAMMTPVASASVSGFGLVIIGLLLLLVLGELRRFRQTPPVSDAG</sequence>
<gene>
    <name evidence="1" type="primary">entS</name>
    <name type="ordered locus">STY0637</name>
    <name type="ordered locus">t2275</name>
</gene>